<feature type="chain" id="PRO_0000145812" description="Biopolymer transport protein ExbB">
    <location>
        <begin position="1"/>
        <end position="244"/>
    </location>
</feature>
<feature type="topological domain" description="Periplasmic" evidence="2">
    <location>
        <begin position="1"/>
        <end position="20"/>
    </location>
</feature>
<feature type="transmembrane region" description="Helical" evidence="2">
    <location>
        <begin position="21"/>
        <end position="41"/>
    </location>
</feature>
<feature type="topological domain" description="Cytoplasmic" evidence="2">
    <location>
        <begin position="42"/>
        <end position="132"/>
    </location>
</feature>
<feature type="transmembrane region" description="Helical" evidence="2">
    <location>
        <begin position="133"/>
        <end position="153"/>
    </location>
</feature>
<feature type="topological domain" description="Periplasmic" evidence="2">
    <location>
        <begin position="154"/>
        <end position="177"/>
    </location>
</feature>
<feature type="transmembrane region" description="Helical" evidence="2">
    <location>
        <begin position="178"/>
        <end position="198"/>
    </location>
</feature>
<feature type="topological domain" description="Cytoplasmic" evidence="2">
    <location>
        <begin position="199"/>
        <end position="244"/>
    </location>
</feature>
<feature type="sequence conflict" description="In Ref. 2." evidence="3" ref="2">
    <original>E</original>
    <variation>G</variation>
    <location>
        <position position="105"/>
    </location>
</feature>
<comment type="function">
    <text evidence="1">Involved in the TonB-dependent energy-dependent transport of various receptor-bound substrates. Protects ExbD from proteolytic degradation and functionally stabilizes TonB (By similarity).</text>
</comment>
<comment type="subunit">
    <text>The accessory proteins ExbB and ExbD seem to form a complex with TonB.</text>
</comment>
<comment type="subcellular location">
    <subcellularLocation>
        <location>Cell inner membrane</location>
        <topology>Multi-pass membrane protein</topology>
    </subcellularLocation>
</comment>
<comment type="similarity">
    <text evidence="3">Belongs to the ExbB/TolQ family.</text>
</comment>
<dbReference type="EMBL" id="AE006468">
    <property type="protein sequence ID" value="AAL22033.1"/>
    <property type="molecule type" value="Genomic_DNA"/>
</dbReference>
<dbReference type="PIR" id="PV0006">
    <property type="entry name" value="PV0006"/>
</dbReference>
<dbReference type="RefSeq" id="NP_462074.1">
    <property type="nucleotide sequence ID" value="NC_003197.2"/>
</dbReference>
<dbReference type="RefSeq" id="WP_000527859.1">
    <property type="nucleotide sequence ID" value="NC_003197.2"/>
</dbReference>
<dbReference type="SMR" id="P0A1H7"/>
<dbReference type="STRING" id="99287.STM3159"/>
<dbReference type="PaxDb" id="99287-STM3159"/>
<dbReference type="GeneID" id="1254682"/>
<dbReference type="KEGG" id="stm:STM3159"/>
<dbReference type="PATRIC" id="fig|99287.12.peg.3348"/>
<dbReference type="HOGENOM" id="CLU_053325_0_2_6"/>
<dbReference type="OMA" id="PHMVKVG"/>
<dbReference type="PhylomeDB" id="P0A1H7"/>
<dbReference type="BioCyc" id="SENT99287:STM3159-MONOMER"/>
<dbReference type="Proteomes" id="UP000001014">
    <property type="component" value="Chromosome"/>
</dbReference>
<dbReference type="GO" id="GO:0005886">
    <property type="term" value="C:plasma membrane"/>
    <property type="evidence" value="ECO:0000318"/>
    <property type="project" value="GO_Central"/>
</dbReference>
<dbReference type="GO" id="GO:0022857">
    <property type="term" value="F:transmembrane transporter activity"/>
    <property type="evidence" value="ECO:0007669"/>
    <property type="project" value="InterPro"/>
</dbReference>
<dbReference type="GO" id="GO:0043213">
    <property type="term" value="P:bacteriocin transport"/>
    <property type="evidence" value="ECO:0007669"/>
    <property type="project" value="UniProtKB-KW"/>
</dbReference>
<dbReference type="GO" id="GO:0017038">
    <property type="term" value="P:protein import"/>
    <property type="evidence" value="ECO:0000318"/>
    <property type="project" value="GO_Central"/>
</dbReference>
<dbReference type="InterPro" id="IPR050790">
    <property type="entry name" value="ExbB/TolQ_transport"/>
</dbReference>
<dbReference type="InterPro" id="IPR002898">
    <property type="entry name" value="MotA_ExbB_proton_chnl"/>
</dbReference>
<dbReference type="InterPro" id="IPR014164">
    <property type="entry name" value="TonB_ExbB_1"/>
</dbReference>
<dbReference type="NCBIfam" id="TIGR02797">
    <property type="entry name" value="exbB"/>
    <property type="match status" value="1"/>
</dbReference>
<dbReference type="NCBIfam" id="NF007722">
    <property type="entry name" value="PRK10414.1"/>
    <property type="match status" value="1"/>
</dbReference>
<dbReference type="PANTHER" id="PTHR30625:SF16">
    <property type="entry name" value="BIOPOLYMER TRANSPORT PROTEIN EXBB"/>
    <property type="match status" value="1"/>
</dbReference>
<dbReference type="PANTHER" id="PTHR30625">
    <property type="entry name" value="PROTEIN TOLQ"/>
    <property type="match status" value="1"/>
</dbReference>
<dbReference type="Pfam" id="PF01618">
    <property type="entry name" value="MotA_ExbB"/>
    <property type="match status" value="1"/>
</dbReference>
<accession>P0A1H7</accession>
<accession>P18950</accession>
<protein>
    <recommendedName>
        <fullName>Biopolymer transport protein ExbB</fullName>
    </recommendedName>
</protein>
<proteinExistence type="inferred from homology"/>
<gene>
    <name type="primary">exbB</name>
    <name type="ordered locus">STM3159</name>
</gene>
<sequence>MGNNLMQTDLSVWGMYQHADIVVKCVMIGLILASVVTWAIFFSKSVEFFTQKRRLKREQLQLADARSLDQASDIAAGFSAKSLSAQLINEAQNELELSQGSEDNEGIKERTGFRLERRVAAVGRYMGRGNGYLATIGAISPFVGLFGTVWGIMNSFIGIAQTQTTNLAVVAPGIAEALLATAIGLVAAIPAVVIYNIFARQIGSYKATLGDVAAQVLLLQSRDLDLNASASAQPVRAAQKLRVG</sequence>
<organism>
    <name type="scientific">Salmonella typhimurium (strain LT2 / SGSC1412 / ATCC 700720)</name>
    <dbReference type="NCBI Taxonomy" id="99287"/>
    <lineage>
        <taxon>Bacteria</taxon>
        <taxon>Pseudomonadati</taxon>
        <taxon>Pseudomonadota</taxon>
        <taxon>Gammaproteobacteria</taxon>
        <taxon>Enterobacterales</taxon>
        <taxon>Enterobacteriaceae</taxon>
        <taxon>Salmonella</taxon>
    </lineage>
</organism>
<reference key="1">
    <citation type="journal article" date="2001" name="Nature">
        <title>Complete genome sequence of Salmonella enterica serovar Typhimurium LT2.</title>
        <authorList>
            <person name="McClelland M."/>
            <person name="Sanderson K.E."/>
            <person name="Spieth J."/>
            <person name="Clifton S.W."/>
            <person name="Latreille P."/>
            <person name="Courtney L."/>
            <person name="Porwollik S."/>
            <person name="Ali J."/>
            <person name="Dante M."/>
            <person name="Du F."/>
            <person name="Hou S."/>
            <person name="Layman D."/>
            <person name="Leonard S."/>
            <person name="Nguyen C."/>
            <person name="Scott K."/>
            <person name="Holmes A."/>
            <person name="Grewal N."/>
            <person name="Mulvaney E."/>
            <person name="Ryan E."/>
            <person name="Sun H."/>
            <person name="Florea L."/>
            <person name="Miller W."/>
            <person name="Stoneking T."/>
            <person name="Nhan M."/>
            <person name="Waterston R."/>
            <person name="Wilson R.K."/>
        </authorList>
    </citation>
    <scope>NUCLEOTIDE SEQUENCE [LARGE SCALE GENOMIC DNA]</scope>
    <source>
        <strain>LT2 / SGSC1412 / ATCC 700720</strain>
    </source>
</reference>
<reference key="2">
    <citation type="journal article" date="1989" name="Mol. Gen. Genet.">
        <title>DNA sequence of the metC gene and its flanking regions from Salmonella typhimurium LT2 and homology with the corresponding sequence of Escherichia coli.</title>
        <authorList>
            <person name="Park Y.M."/>
            <person name="Stauffer G.V."/>
        </authorList>
    </citation>
    <scope>NUCLEOTIDE SEQUENCE [GENOMIC DNA] OF 1-110</scope>
    <source>
        <strain>LT2</strain>
    </source>
</reference>
<name>EXBB_SALTY</name>
<keyword id="KW-0080">Bacteriocin transport</keyword>
<keyword id="KW-0997">Cell inner membrane</keyword>
<keyword id="KW-1003">Cell membrane</keyword>
<keyword id="KW-0472">Membrane</keyword>
<keyword id="KW-0653">Protein transport</keyword>
<keyword id="KW-1185">Reference proteome</keyword>
<keyword id="KW-0812">Transmembrane</keyword>
<keyword id="KW-1133">Transmembrane helix</keyword>
<keyword id="KW-0813">Transport</keyword>
<evidence type="ECO:0000250" key="1"/>
<evidence type="ECO:0000255" key="2"/>
<evidence type="ECO:0000305" key="3"/>